<feature type="chain" id="PRO_0000194052" description="Transcription initiation factor IIA subunit 2">
    <location>
        <begin position="1"/>
        <end position="109"/>
    </location>
</feature>
<gene>
    <name type="primary">toa2</name>
    <name type="ORF">SPCC553.11c</name>
</gene>
<evidence type="ECO:0000250" key="1"/>
<evidence type="ECO:0000269" key="2">
    <source>
    </source>
</evidence>
<evidence type="ECO:0000305" key="3"/>
<protein>
    <recommendedName>
        <fullName>Transcription initiation factor IIA subunit 2</fullName>
    </recommendedName>
    <alternativeName>
        <fullName>General transcription factor IIA subunit 2</fullName>
    </alternativeName>
    <alternativeName>
        <fullName>Transcription initiation factor IIA small chain</fullName>
    </alternativeName>
</protein>
<comment type="function">
    <text evidence="1">TFIIA is a component of the transcription machinery of RNA polymerase II and plays an important role in transcriptional activation. TFIIA in a complex with tbp mediates transcriptional activity (By similarity).</text>
</comment>
<comment type="subunit">
    <text evidence="1">TFIIA is a heterodimer composed of the large toa1 and the small toa2 subunits.</text>
</comment>
<comment type="subcellular location">
    <subcellularLocation>
        <location evidence="2">Nucleus</location>
    </subcellularLocation>
    <subcellularLocation>
        <location evidence="2">Cytoplasm</location>
    </subcellularLocation>
</comment>
<comment type="similarity">
    <text evidence="3">Belongs to the TFIIA subunit 2 family.</text>
</comment>
<name>T2AG_SCHPO</name>
<organism>
    <name type="scientific">Schizosaccharomyces pombe (strain 972 / ATCC 24843)</name>
    <name type="common">Fission yeast</name>
    <dbReference type="NCBI Taxonomy" id="284812"/>
    <lineage>
        <taxon>Eukaryota</taxon>
        <taxon>Fungi</taxon>
        <taxon>Dikarya</taxon>
        <taxon>Ascomycota</taxon>
        <taxon>Taphrinomycotina</taxon>
        <taxon>Schizosaccharomycetes</taxon>
        <taxon>Schizosaccharomycetales</taxon>
        <taxon>Schizosaccharomycetaceae</taxon>
        <taxon>Schizosaccharomyces</taxon>
    </lineage>
</organism>
<accession>O74948</accession>
<reference key="1">
    <citation type="journal article" date="2002" name="Nature">
        <title>The genome sequence of Schizosaccharomyces pombe.</title>
        <authorList>
            <person name="Wood V."/>
            <person name="Gwilliam R."/>
            <person name="Rajandream M.A."/>
            <person name="Lyne M.H."/>
            <person name="Lyne R."/>
            <person name="Stewart A."/>
            <person name="Sgouros J.G."/>
            <person name="Peat N."/>
            <person name="Hayles J."/>
            <person name="Baker S.G."/>
            <person name="Basham D."/>
            <person name="Bowman S."/>
            <person name="Brooks K."/>
            <person name="Brown D."/>
            <person name="Brown S."/>
            <person name="Chillingworth T."/>
            <person name="Churcher C.M."/>
            <person name="Collins M."/>
            <person name="Connor R."/>
            <person name="Cronin A."/>
            <person name="Davis P."/>
            <person name="Feltwell T."/>
            <person name="Fraser A."/>
            <person name="Gentles S."/>
            <person name="Goble A."/>
            <person name="Hamlin N."/>
            <person name="Harris D.E."/>
            <person name="Hidalgo J."/>
            <person name="Hodgson G."/>
            <person name="Holroyd S."/>
            <person name="Hornsby T."/>
            <person name="Howarth S."/>
            <person name="Huckle E.J."/>
            <person name="Hunt S."/>
            <person name="Jagels K."/>
            <person name="James K.D."/>
            <person name="Jones L."/>
            <person name="Jones M."/>
            <person name="Leather S."/>
            <person name="McDonald S."/>
            <person name="McLean J."/>
            <person name="Mooney P."/>
            <person name="Moule S."/>
            <person name="Mungall K.L."/>
            <person name="Murphy L.D."/>
            <person name="Niblett D."/>
            <person name="Odell C."/>
            <person name="Oliver K."/>
            <person name="O'Neil S."/>
            <person name="Pearson D."/>
            <person name="Quail M.A."/>
            <person name="Rabbinowitsch E."/>
            <person name="Rutherford K.M."/>
            <person name="Rutter S."/>
            <person name="Saunders D."/>
            <person name="Seeger K."/>
            <person name="Sharp S."/>
            <person name="Skelton J."/>
            <person name="Simmonds M.N."/>
            <person name="Squares R."/>
            <person name="Squares S."/>
            <person name="Stevens K."/>
            <person name="Taylor K."/>
            <person name="Taylor R.G."/>
            <person name="Tivey A."/>
            <person name="Walsh S.V."/>
            <person name="Warren T."/>
            <person name="Whitehead S."/>
            <person name="Woodward J.R."/>
            <person name="Volckaert G."/>
            <person name="Aert R."/>
            <person name="Robben J."/>
            <person name="Grymonprez B."/>
            <person name="Weltjens I."/>
            <person name="Vanstreels E."/>
            <person name="Rieger M."/>
            <person name="Schaefer M."/>
            <person name="Mueller-Auer S."/>
            <person name="Gabel C."/>
            <person name="Fuchs M."/>
            <person name="Duesterhoeft A."/>
            <person name="Fritzc C."/>
            <person name="Holzer E."/>
            <person name="Moestl D."/>
            <person name="Hilbert H."/>
            <person name="Borzym K."/>
            <person name="Langer I."/>
            <person name="Beck A."/>
            <person name="Lehrach H."/>
            <person name="Reinhardt R."/>
            <person name="Pohl T.M."/>
            <person name="Eger P."/>
            <person name="Zimmermann W."/>
            <person name="Wedler H."/>
            <person name="Wambutt R."/>
            <person name="Purnelle B."/>
            <person name="Goffeau A."/>
            <person name="Cadieu E."/>
            <person name="Dreano S."/>
            <person name="Gloux S."/>
            <person name="Lelaure V."/>
            <person name="Mottier S."/>
            <person name="Galibert F."/>
            <person name="Aves S.J."/>
            <person name="Xiang Z."/>
            <person name="Hunt C."/>
            <person name="Moore K."/>
            <person name="Hurst S.M."/>
            <person name="Lucas M."/>
            <person name="Rochet M."/>
            <person name="Gaillardin C."/>
            <person name="Tallada V.A."/>
            <person name="Garzon A."/>
            <person name="Thode G."/>
            <person name="Daga R.R."/>
            <person name="Cruzado L."/>
            <person name="Jimenez J."/>
            <person name="Sanchez M."/>
            <person name="del Rey F."/>
            <person name="Benito J."/>
            <person name="Dominguez A."/>
            <person name="Revuelta J.L."/>
            <person name="Moreno S."/>
            <person name="Armstrong J."/>
            <person name="Forsburg S.L."/>
            <person name="Cerutti L."/>
            <person name="Lowe T."/>
            <person name="McCombie W.R."/>
            <person name="Paulsen I."/>
            <person name="Potashkin J."/>
            <person name="Shpakovski G.V."/>
            <person name="Ussery D."/>
            <person name="Barrell B.G."/>
            <person name="Nurse P."/>
        </authorList>
    </citation>
    <scope>NUCLEOTIDE SEQUENCE [LARGE SCALE GENOMIC DNA]</scope>
    <source>
        <strain>972 / ATCC 24843</strain>
    </source>
</reference>
<reference key="2">
    <citation type="journal article" date="2011" name="Science">
        <title>Comparative functional genomics of the fission yeasts.</title>
        <authorList>
            <person name="Rhind N."/>
            <person name="Chen Z."/>
            <person name="Yassour M."/>
            <person name="Thompson D.A."/>
            <person name="Haas B.J."/>
            <person name="Habib N."/>
            <person name="Wapinski I."/>
            <person name="Roy S."/>
            <person name="Lin M.F."/>
            <person name="Heiman D.I."/>
            <person name="Young S.K."/>
            <person name="Furuya K."/>
            <person name="Guo Y."/>
            <person name="Pidoux A."/>
            <person name="Chen H.M."/>
            <person name="Robbertse B."/>
            <person name="Goldberg J.M."/>
            <person name="Aoki K."/>
            <person name="Bayne E.H."/>
            <person name="Berlin A.M."/>
            <person name="Desjardins C.A."/>
            <person name="Dobbs E."/>
            <person name="Dukaj L."/>
            <person name="Fan L."/>
            <person name="FitzGerald M.G."/>
            <person name="French C."/>
            <person name="Gujja S."/>
            <person name="Hansen K."/>
            <person name="Keifenheim D."/>
            <person name="Levin J.Z."/>
            <person name="Mosher R.A."/>
            <person name="Mueller C.A."/>
            <person name="Pfiffner J."/>
            <person name="Priest M."/>
            <person name="Russ C."/>
            <person name="Smialowska A."/>
            <person name="Swoboda P."/>
            <person name="Sykes S.M."/>
            <person name="Vaughn M."/>
            <person name="Vengrova S."/>
            <person name="Yoder R."/>
            <person name="Zeng Q."/>
            <person name="Allshire R."/>
            <person name="Baulcombe D."/>
            <person name="Birren B.W."/>
            <person name="Brown W."/>
            <person name="Ekwall K."/>
            <person name="Kellis M."/>
            <person name="Leatherwood J."/>
            <person name="Levin H."/>
            <person name="Margalit H."/>
            <person name="Martienssen R."/>
            <person name="Nieduszynski C.A."/>
            <person name="Spatafora J.W."/>
            <person name="Friedman N."/>
            <person name="Dalgaard J.Z."/>
            <person name="Baumann P."/>
            <person name="Niki H."/>
            <person name="Regev A."/>
            <person name="Nusbaum C."/>
        </authorList>
    </citation>
    <scope>REVISION OF GENE MODEL</scope>
</reference>
<reference key="3">
    <citation type="journal article" date="2006" name="Nat. Biotechnol.">
        <title>ORFeome cloning and global analysis of protein localization in the fission yeast Schizosaccharomyces pombe.</title>
        <authorList>
            <person name="Matsuyama A."/>
            <person name="Arai R."/>
            <person name="Yashiroda Y."/>
            <person name="Shirai A."/>
            <person name="Kamata A."/>
            <person name="Sekido S."/>
            <person name="Kobayashi Y."/>
            <person name="Hashimoto A."/>
            <person name="Hamamoto M."/>
            <person name="Hiraoka Y."/>
            <person name="Horinouchi S."/>
            <person name="Yoshida M."/>
        </authorList>
    </citation>
    <scope>SUBCELLULAR LOCATION [LARGE SCALE ANALYSIS]</scope>
</reference>
<keyword id="KW-0963">Cytoplasm</keyword>
<keyword id="KW-0539">Nucleus</keyword>
<keyword id="KW-1185">Reference proteome</keyword>
<keyword id="KW-0804">Transcription</keyword>
<keyword id="KW-0805">Transcription regulation</keyword>
<proteinExistence type="inferred from homology"/>
<sequence>MSQYYELYRRSSIGISLTDALDDLISQGKISPQLAMKVLFNFDKSMTEALAEKVRSRLTFKGHLDTYRFCDEVWTFIIKNPSFRFDNETVTSNKIRIVACATRDSSANR</sequence>
<dbReference type="EMBL" id="CU329672">
    <property type="protein sequence ID" value="CAA19263.2"/>
    <property type="molecule type" value="Genomic_DNA"/>
</dbReference>
<dbReference type="PIR" id="T41393">
    <property type="entry name" value="T41393"/>
</dbReference>
<dbReference type="RefSeq" id="NP_587763.2">
    <property type="nucleotide sequence ID" value="NM_001022756.2"/>
</dbReference>
<dbReference type="SMR" id="O74948"/>
<dbReference type="BioGRID" id="275439">
    <property type="interactions" value="3"/>
</dbReference>
<dbReference type="FunCoup" id="O74948">
    <property type="interactions" value="228"/>
</dbReference>
<dbReference type="STRING" id="284812.O74948"/>
<dbReference type="iPTMnet" id="O74948"/>
<dbReference type="PaxDb" id="4896-SPCC553.11c.1"/>
<dbReference type="EnsemblFungi" id="SPCC553.11c.1">
    <property type="protein sequence ID" value="SPCC553.11c.1:pep"/>
    <property type="gene ID" value="SPCC553.11c"/>
</dbReference>
<dbReference type="GeneID" id="2538859"/>
<dbReference type="KEGG" id="spo:2538859"/>
<dbReference type="PomBase" id="SPCC553.11c">
    <property type="gene designation" value="toa2"/>
</dbReference>
<dbReference type="VEuPathDB" id="FungiDB:SPCC553.11c"/>
<dbReference type="eggNOG" id="KOG3463">
    <property type="taxonomic scope" value="Eukaryota"/>
</dbReference>
<dbReference type="HOGENOM" id="CLU_112964_3_1_1"/>
<dbReference type="InParanoid" id="O74948"/>
<dbReference type="OMA" id="QYYELYR"/>
<dbReference type="Reactome" id="R-SPO-674695">
    <property type="pathway name" value="RNA Polymerase II Pre-transcription Events"/>
</dbReference>
<dbReference type="Reactome" id="R-SPO-6807505">
    <property type="pathway name" value="RNA polymerase II transcribes snRNA genes"/>
</dbReference>
<dbReference type="Reactome" id="R-SPO-73776">
    <property type="pathway name" value="RNA Polymerase II Promoter Escape"/>
</dbReference>
<dbReference type="Reactome" id="R-SPO-73779">
    <property type="pathway name" value="RNA Polymerase II Transcription Pre-Initiation And Promoter Opening"/>
</dbReference>
<dbReference type="Reactome" id="R-SPO-75953">
    <property type="pathway name" value="RNA Polymerase II Transcription Initiation"/>
</dbReference>
<dbReference type="Reactome" id="R-SPO-76042">
    <property type="pathway name" value="RNA Polymerase II Transcription Initiation And Promoter Clearance"/>
</dbReference>
<dbReference type="Reactome" id="R-SPO-9018519">
    <property type="pathway name" value="Estrogen-dependent gene expression"/>
</dbReference>
<dbReference type="PRO" id="PR:O74948"/>
<dbReference type="Proteomes" id="UP000002485">
    <property type="component" value="Chromosome III"/>
</dbReference>
<dbReference type="GO" id="GO:0005829">
    <property type="term" value="C:cytosol"/>
    <property type="evidence" value="ECO:0007005"/>
    <property type="project" value="PomBase"/>
</dbReference>
<dbReference type="GO" id="GO:0005634">
    <property type="term" value="C:nucleus"/>
    <property type="evidence" value="ECO:0007005"/>
    <property type="project" value="PomBase"/>
</dbReference>
<dbReference type="GO" id="GO:0005672">
    <property type="term" value="C:transcription factor TFIIA complex"/>
    <property type="evidence" value="ECO:0000318"/>
    <property type="project" value="GO_Central"/>
</dbReference>
<dbReference type="GO" id="GO:0016251">
    <property type="term" value="F:RNA polymerase II general transcription initiation factor activity"/>
    <property type="evidence" value="ECO:0000266"/>
    <property type="project" value="PomBase"/>
</dbReference>
<dbReference type="GO" id="GO:0017025">
    <property type="term" value="F:TBP-class protein binding"/>
    <property type="evidence" value="ECO:0000318"/>
    <property type="project" value="GO_Central"/>
</dbReference>
<dbReference type="GO" id="GO:0051123">
    <property type="term" value="P:RNA polymerase II preinitiation complex assembly"/>
    <property type="evidence" value="ECO:0000318"/>
    <property type="project" value="GO_Central"/>
</dbReference>
<dbReference type="CDD" id="cd10014">
    <property type="entry name" value="TFIIA_gamma_C"/>
    <property type="match status" value="1"/>
</dbReference>
<dbReference type="CDD" id="cd10145">
    <property type="entry name" value="TFIIA_gamma_N"/>
    <property type="match status" value="1"/>
</dbReference>
<dbReference type="FunFam" id="1.10.287.190:FF:000001">
    <property type="entry name" value="Transcription initiation factor IIA subunit 2"/>
    <property type="match status" value="1"/>
</dbReference>
<dbReference type="FunFam" id="2.30.18.10:FF:000003">
    <property type="entry name" value="Transcription initiation factor IIA subunit 2"/>
    <property type="match status" value="1"/>
</dbReference>
<dbReference type="Gene3D" id="2.30.18.10">
    <property type="entry name" value="Transcription factor IIA (TFIIA), beta-barrel domain"/>
    <property type="match status" value="1"/>
</dbReference>
<dbReference type="Gene3D" id="1.10.287.190">
    <property type="entry name" value="Transcription factor IIA gamma subunit, alpha-helical domain"/>
    <property type="match status" value="1"/>
</dbReference>
<dbReference type="InterPro" id="IPR009083">
    <property type="entry name" value="TFIIA_a-hlx"/>
</dbReference>
<dbReference type="InterPro" id="IPR009088">
    <property type="entry name" value="TFIIA_b-brl"/>
</dbReference>
<dbReference type="InterPro" id="IPR003194">
    <property type="entry name" value="TFIIA_gsu"/>
</dbReference>
<dbReference type="InterPro" id="IPR015871">
    <property type="entry name" value="TFIIA_gsu_C"/>
</dbReference>
<dbReference type="InterPro" id="IPR015872">
    <property type="entry name" value="TFIIA_gsu_N"/>
</dbReference>
<dbReference type="PANTHER" id="PTHR10966">
    <property type="entry name" value="TRANSCRIPTION INITIATION FACTOR IIA SUBUNIT 2"/>
    <property type="match status" value="1"/>
</dbReference>
<dbReference type="Pfam" id="PF02751">
    <property type="entry name" value="TFIIA_gamma_C"/>
    <property type="match status" value="1"/>
</dbReference>
<dbReference type="Pfam" id="PF02268">
    <property type="entry name" value="TFIIA_gamma_N"/>
    <property type="match status" value="1"/>
</dbReference>
<dbReference type="PIRSF" id="PIRSF009415">
    <property type="entry name" value="Hum_TFIIA_gamma"/>
    <property type="match status" value="1"/>
</dbReference>
<dbReference type="SUPFAM" id="SSF47396">
    <property type="entry name" value="Transcription factor IIA (TFIIA), alpha-helical domain"/>
    <property type="match status" value="1"/>
</dbReference>
<dbReference type="SUPFAM" id="SSF50784">
    <property type="entry name" value="Transcription factor IIA (TFIIA), beta-barrel domain"/>
    <property type="match status" value="1"/>
</dbReference>